<organism>
    <name type="scientific">Drosophila melanogaster</name>
    <name type="common">Fruit fly</name>
    <dbReference type="NCBI Taxonomy" id="7227"/>
    <lineage>
        <taxon>Eukaryota</taxon>
        <taxon>Metazoa</taxon>
        <taxon>Ecdysozoa</taxon>
        <taxon>Arthropoda</taxon>
        <taxon>Hexapoda</taxon>
        <taxon>Insecta</taxon>
        <taxon>Pterygota</taxon>
        <taxon>Neoptera</taxon>
        <taxon>Endopterygota</taxon>
        <taxon>Diptera</taxon>
        <taxon>Brachycera</taxon>
        <taxon>Muscomorpha</taxon>
        <taxon>Ephydroidea</taxon>
        <taxon>Drosophilidae</taxon>
        <taxon>Drosophila</taxon>
        <taxon>Sophophora</taxon>
    </lineage>
</organism>
<keyword id="KW-1185">Reference proteome</keyword>
<keyword id="KW-0732">Signal</keyword>
<proteinExistence type="evidence at transcript level"/>
<accession>P02841</accession>
<accession>Q9VTJ0</accession>
<feature type="signal peptide">
    <location>
        <begin position="1"/>
        <end position="23"/>
    </location>
</feature>
<feature type="chain" id="PRO_0000022334" description="Salivary glue protein Sgs-7">
    <location>
        <begin position="24"/>
        <end position="74"/>
    </location>
</feature>
<reference key="1">
    <citation type="journal article" date="1983" name="J. Mol. Biol.">
        <title>DNA sequences, gene regulation and modular protein evolution in the Drosophila 68C glue gene cluster.</title>
        <authorList>
            <person name="Garfinkel M.D."/>
            <person name="Pruitt R.E."/>
            <person name="Meyerowitz E.M."/>
        </authorList>
    </citation>
    <scope>NUCLEOTIDE SEQUENCE [GENOMIC DNA]</scope>
</reference>
<reference key="2">
    <citation type="journal article" date="2000" name="Science">
        <title>The genome sequence of Drosophila melanogaster.</title>
        <authorList>
            <person name="Adams M.D."/>
            <person name="Celniker S.E."/>
            <person name="Holt R.A."/>
            <person name="Evans C.A."/>
            <person name="Gocayne J.D."/>
            <person name="Amanatides P.G."/>
            <person name="Scherer S.E."/>
            <person name="Li P.W."/>
            <person name="Hoskins R.A."/>
            <person name="Galle R.F."/>
            <person name="George R.A."/>
            <person name="Lewis S.E."/>
            <person name="Richards S."/>
            <person name="Ashburner M."/>
            <person name="Henderson S.N."/>
            <person name="Sutton G.G."/>
            <person name="Wortman J.R."/>
            <person name="Yandell M.D."/>
            <person name="Zhang Q."/>
            <person name="Chen L.X."/>
            <person name="Brandon R.C."/>
            <person name="Rogers Y.-H.C."/>
            <person name="Blazej R.G."/>
            <person name="Champe M."/>
            <person name="Pfeiffer B.D."/>
            <person name="Wan K.H."/>
            <person name="Doyle C."/>
            <person name="Baxter E.G."/>
            <person name="Helt G."/>
            <person name="Nelson C.R."/>
            <person name="Miklos G.L.G."/>
            <person name="Abril J.F."/>
            <person name="Agbayani A."/>
            <person name="An H.-J."/>
            <person name="Andrews-Pfannkoch C."/>
            <person name="Baldwin D."/>
            <person name="Ballew R.M."/>
            <person name="Basu A."/>
            <person name="Baxendale J."/>
            <person name="Bayraktaroglu L."/>
            <person name="Beasley E.M."/>
            <person name="Beeson K.Y."/>
            <person name="Benos P.V."/>
            <person name="Berman B.P."/>
            <person name="Bhandari D."/>
            <person name="Bolshakov S."/>
            <person name="Borkova D."/>
            <person name="Botchan M.R."/>
            <person name="Bouck J."/>
            <person name="Brokstein P."/>
            <person name="Brottier P."/>
            <person name="Burtis K.C."/>
            <person name="Busam D.A."/>
            <person name="Butler H."/>
            <person name="Cadieu E."/>
            <person name="Center A."/>
            <person name="Chandra I."/>
            <person name="Cherry J.M."/>
            <person name="Cawley S."/>
            <person name="Dahlke C."/>
            <person name="Davenport L.B."/>
            <person name="Davies P."/>
            <person name="de Pablos B."/>
            <person name="Delcher A."/>
            <person name="Deng Z."/>
            <person name="Mays A.D."/>
            <person name="Dew I."/>
            <person name="Dietz S.M."/>
            <person name="Dodson K."/>
            <person name="Doup L.E."/>
            <person name="Downes M."/>
            <person name="Dugan-Rocha S."/>
            <person name="Dunkov B.C."/>
            <person name="Dunn P."/>
            <person name="Durbin K.J."/>
            <person name="Evangelista C.C."/>
            <person name="Ferraz C."/>
            <person name="Ferriera S."/>
            <person name="Fleischmann W."/>
            <person name="Fosler C."/>
            <person name="Gabrielian A.E."/>
            <person name="Garg N.S."/>
            <person name="Gelbart W.M."/>
            <person name="Glasser K."/>
            <person name="Glodek A."/>
            <person name="Gong F."/>
            <person name="Gorrell J.H."/>
            <person name="Gu Z."/>
            <person name="Guan P."/>
            <person name="Harris M."/>
            <person name="Harris N.L."/>
            <person name="Harvey D.A."/>
            <person name="Heiman T.J."/>
            <person name="Hernandez J.R."/>
            <person name="Houck J."/>
            <person name="Hostin D."/>
            <person name="Houston K.A."/>
            <person name="Howland T.J."/>
            <person name="Wei M.-H."/>
            <person name="Ibegwam C."/>
            <person name="Jalali M."/>
            <person name="Kalush F."/>
            <person name="Karpen G.H."/>
            <person name="Ke Z."/>
            <person name="Kennison J.A."/>
            <person name="Ketchum K.A."/>
            <person name="Kimmel B.E."/>
            <person name="Kodira C.D."/>
            <person name="Kraft C.L."/>
            <person name="Kravitz S."/>
            <person name="Kulp D."/>
            <person name="Lai Z."/>
            <person name="Lasko P."/>
            <person name="Lei Y."/>
            <person name="Levitsky A.A."/>
            <person name="Li J.H."/>
            <person name="Li Z."/>
            <person name="Liang Y."/>
            <person name="Lin X."/>
            <person name="Liu X."/>
            <person name="Mattei B."/>
            <person name="McIntosh T.C."/>
            <person name="McLeod M.P."/>
            <person name="McPherson D."/>
            <person name="Merkulov G."/>
            <person name="Milshina N.V."/>
            <person name="Mobarry C."/>
            <person name="Morris J."/>
            <person name="Moshrefi A."/>
            <person name="Mount S.M."/>
            <person name="Moy M."/>
            <person name="Murphy B."/>
            <person name="Murphy L."/>
            <person name="Muzny D.M."/>
            <person name="Nelson D.L."/>
            <person name="Nelson D.R."/>
            <person name="Nelson K.A."/>
            <person name="Nixon K."/>
            <person name="Nusskern D.R."/>
            <person name="Pacleb J.M."/>
            <person name="Palazzolo M."/>
            <person name="Pittman G.S."/>
            <person name="Pan S."/>
            <person name="Pollard J."/>
            <person name="Puri V."/>
            <person name="Reese M.G."/>
            <person name="Reinert K."/>
            <person name="Remington K."/>
            <person name="Saunders R.D.C."/>
            <person name="Scheeler F."/>
            <person name="Shen H."/>
            <person name="Shue B.C."/>
            <person name="Siden-Kiamos I."/>
            <person name="Simpson M."/>
            <person name="Skupski M.P."/>
            <person name="Smith T.J."/>
            <person name="Spier E."/>
            <person name="Spradling A.C."/>
            <person name="Stapleton M."/>
            <person name="Strong R."/>
            <person name="Sun E."/>
            <person name="Svirskas R."/>
            <person name="Tector C."/>
            <person name="Turner R."/>
            <person name="Venter E."/>
            <person name="Wang A.H."/>
            <person name="Wang X."/>
            <person name="Wang Z.-Y."/>
            <person name="Wassarman D.A."/>
            <person name="Weinstock G.M."/>
            <person name="Weissenbach J."/>
            <person name="Williams S.M."/>
            <person name="Woodage T."/>
            <person name="Worley K.C."/>
            <person name="Wu D."/>
            <person name="Yang S."/>
            <person name="Yao Q.A."/>
            <person name="Ye J."/>
            <person name="Yeh R.-F."/>
            <person name="Zaveri J.S."/>
            <person name="Zhan M."/>
            <person name="Zhang G."/>
            <person name="Zhao Q."/>
            <person name="Zheng L."/>
            <person name="Zheng X.H."/>
            <person name="Zhong F.N."/>
            <person name="Zhong W."/>
            <person name="Zhou X."/>
            <person name="Zhu S.C."/>
            <person name="Zhu X."/>
            <person name="Smith H.O."/>
            <person name="Gibbs R.A."/>
            <person name="Myers E.W."/>
            <person name="Rubin G.M."/>
            <person name="Venter J.C."/>
        </authorList>
    </citation>
    <scope>NUCLEOTIDE SEQUENCE [LARGE SCALE GENOMIC DNA]</scope>
    <source>
        <strain>Berkeley</strain>
    </source>
</reference>
<reference key="3">
    <citation type="journal article" date="2002" name="Genome Biol.">
        <title>Annotation of the Drosophila melanogaster euchromatic genome: a systematic review.</title>
        <authorList>
            <person name="Misra S."/>
            <person name="Crosby M.A."/>
            <person name="Mungall C.J."/>
            <person name="Matthews B.B."/>
            <person name="Campbell K.S."/>
            <person name="Hradecky P."/>
            <person name="Huang Y."/>
            <person name="Kaminker J.S."/>
            <person name="Millburn G.H."/>
            <person name="Prochnik S.E."/>
            <person name="Smith C.D."/>
            <person name="Tupy J.L."/>
            <person name="Whitfield E.J."/>
            <person name="Bayraktaroglu L."/>
            <person name="Berman B.P."/>
            <person name="Bettencourt B.R."/>
            <person name="Celniker S.E."/>
            <person name="de Grey A.D.N.J."/>
            <person name="Drysdale R.A."/>
            <person name="Harris N.L."/>
            <person name="Richter J."/>
            <person name="Russo S."/>
            <person name="Schroeder A.J."/>
            <person name="Shu S.Q."/>
            <person name="Stapleton M."/>
            <person name="Yamada C."/>
            <person name="Ashburner M."/>
            <person name="Gelbart W.M."/>
            <person name="Rubin G.M."/>
            <person name="Lewis S.E."/>
        </authorList>
    </citation>
    <scope>GENOME REANNOTATION</scope>
    <source>
        <strain>Berkeley</strain>
    </source>
</reference>
<comment type="developmental stage">
    <text>Produced by third-instar larvae.</text>
</comment>
<protein>
    <recommendedName>
        <fullName>Salivary glue protein Sgs-7</fullName>
    </recommendedName>
</protein>
<gene>
    <name type="primary">Sgs7</name>
    <name type="ORF">CG18087</name>
</gene>
<dbReference type="EMBL" id="X01918">
    <property type="protein sequence ID" value="CAA25993.1"/>
    <property type="molecule type" value="Genomic_DNA"/>
</dbReference>
<dbReference type="EMBL" id="AE014296">
    <property type="protein sequence ID" value="AAF50058.1"/>
    <property type="molecule type" value="Genomic_DNA"/>
</dbReference>
<dbReference type="PIR" id="A03330">
    <property type="entry name" value="GSFF7"/>
</dbReference>
<dbReference type="RefSeq" id="NP_476718.1">
    <property type="nucleotide sequence ID" value="NM_057370.2"/>
</dbReference>
<dbReference type="FunCoup" id="P02841">
    <property type="interactions" value="2"/>
</dbReference>
<dbReference type="STRING" id="7227.FBpp0075826"/>
<dbReference type="PaxDb" id="7227-FBpp0075826"/>
<dbReference type="EnsemblMetazoa" id="FBtr0076095">
    <property type="protein sequence ID" value="FBpp0075826"/>
    <property type="gene ID" value="FBgn0003377"/>
</dbReference>
<dbReference type="GeneID" id="47198"/>
<dbReference type="KEGG" id="dme:Dmel_CG18087"/>
<dbReference type="AGR" id="FB:FBgn0003377"/>
<dbReference type="CTD" id="47198"/>
<dbReference type="FlyBase" id="FBgn0003377">
    <property type="gene designation" value="Sgs7"/>
</dbReference>
<dbReference type="VEuPathDB" id="VectorBase:FBgn0003377"/>
<dbReference type="GeneTree" id="ENSGT00940000176463"/>
<dbReference type="HOGENOM" id="CLU_2690406_0_0_1"/>
<dbReference type="InParanoid" id="P02841"/>
<dbReference type="OMA" id="ACECQPC"/>
<dbReference type="OrthoDB" id="7831733at2759"/>
<dbReference type="PhylomeDB" id="P02841"/>
<dbReference type="BioGRID-ORCS" id="47198">
    <property type="hits" value="0 hits in 1 CRISPR screen"/>
</dbReference>
<dbReference type="ChiTaRS" id="Sgs7">
    <property type="organism name" value="fly"/>
</dbReference>
<dbReference type="GenomeRNAi" id="47198"/>
<dbReference type="PRO" id="PR:P02841"/>
<dbReference type="Proteomes" id="UP000000803">
    <property type="component" value="Chromosome 3L"/>
</dbReference>
<dbReference type="Bgee" id="FBgn0003377">
    <property type="expression patterns" value="Expressed in saliva-secreting gland and 13 other cell types or tissues"/>
</dbReference>
<dbReference type="GO" id="GO:0005576">
    <property type="term" value="C:extracellular region"/>
    <property type="evidence" value="ECO:0000314"/>
    <property type="project" value="FlyBase"/>
</dbReference>
<dbReference type="GO" id="GO:0140073">
    <property type="term" value="F:bioadhesive activity"/>
    <property type="evidence" value="ECO:0000269"/>
    <property type="project" value="FlyBase"/>
</dbReference>
<dbReference type="GO" id="GO:0007594">
    <property type="term" value="P:puparial adhesion"/>
    <property type="evidence" value="ECO:0000270"/>
    <property type="project" value="FlyBase"/>
</dbReference>
<sequence>MKLIAVTIIACILLIGFSDLALGGACECQPCGPGGKACTGCPEKPQLCQQLISDIRNLQQKIRKCVCGEPQWMI</sequence>
<name>SGS7_DROME</name>